<feature type="chain" id="PRO_1000055250" description="Large ribosomal subunit protein uL6">
    <location>
        <begin position="1"/>
        <end position="178"/>
    </location>
</feature>
<dbReference type="EMBL" id="CP000425">
    <property type="protein sequence ID" value="ABJ73832.1"/>
    <property type="molecule type" value="Genomic_DNA"/>
</dbReference>
<dbReference type="RefSeq" id="WP_011677154.1">
    <property type="nucleotide sequence ID" value="NC_008527.1"/>
</dbReference>
<dbReference type="SMR" id="Q02W40"/>
<dbReference type="KEGG" id="llc:LACR_2386"/>
<dbReference type="HOGENOM" id="CLU_065464_1_2_9"/>
<dbReference type="Proteomes" id="UP000000240">
    <property type="component" value="Chromosome"/>
</dbReference>
<dbReference type="GO" id="GO:0022625">
    <property type="term" value="C:cytosolic large ribosomal subunit"/>
    <property type="evidence" value="ECO:0007669"/>
    <property type="project" value="TreeGrafter"/>
</dbReference>
<dbReference type="GO" id="GO:0019843">
    <property type="term" value="F:rRNA binding"/>
    <property type="evidence" value="ECO:0007669"/>
    <property type="project" value="UniProtKB-UniRule"/>
</dbReference>
<dbReference type="GO" id="GO:0003735">
    <property type="term" value="F:structural constituent of ribosome"/>
    <property type="evidence" value="ECO:0007669"/>
    <property type="project" value="InterPro"/>
</dbReference>
<dbReference type="GO" id="GO:0002181">
    <property type="term" value="P:cytoplasmic translation"/>
    <property type="evidence" value="ECO:0007669"/>
    <property type="project" value="TreeGrafter"/>
</dbReference>
<dbReference type="FunFam" id="3.90.930.12:FF:000001">
    <property type="entry name" value="50S ribosomal protein L6"/>
    <property type="match status" value="1"/>
</dbReference>
<dbReference type="FunFam" id="3.90.930.12:FF:000002">
    <property type="entry name" value="50S ribosomal protein L6"/>
    <property type="match status" value="1"/>
</dbReference>
<dbReference type="Gene3D" id="3.90.930.12">
    <property type="entry name" value="Ribosomal protein L6, alpha-beta domain"/>
    <property type="match status" value="2"/>
</dbReference>
<dbReference type="HAMAP" id="MF_01365_B">
    <property type="entry name" value="Ribosomal_uL6_B"/>
    <property type="match status" value="1"/>
</dbReference>
<dbReference type="InterPro" id="IPR000702">
    <property type="entry name" value="Ribosomal_uL6-like"/>
</dbReference>
<dbReference type="InterPro" id="IPR036789">
    <property type="entry name" value="Ribosomal_uL6-like_a/b-dom_sf"/>
</dbReference>
<dbReference type="InterPro" id="IPR020040">
    <property type="entry name" value="Ribosomal_uL6_a/b-dom"/>
</dbReference>
<dbReference type="InterPro" id="IPR019906">
    <property type="entry name" value="Ribosomal_uL6_bac-type"/>
</dbReference>
<dbReference type="InterPro" id="IPR002358">
    <property type="entry name" value="Ribosomal_uL6_CS"/>
</dbReference>
<dbReference type="NCBIfam" id="TIGR03654">
    <property type="entry name" value="L6_bact"/>
    <property type="match status" value="1"/>
</dbReference>
<dbReference type="PANTHER" id="PTHR11655">
    <property type="entry name" value="60S/50S RIBOSOMAL PROTEIN L6/L9"/>
    <property type="match status" value="1"/>
</dbReference>
<dbReference type="PANTHER" id="PTHR11655:SF14">
    <property type="entry name" value="LARGE RIBOSOMAL SUBUNIT PROTEIN UL6M"/>
    <property type="match status" value="1"/>
</dbReference>
<dbReference type="Pfam" id="PF00347">
    <property type="entry name" value="Ribosomal_L6"/>
    <property type="match status" value="2"/>
</dbReference>
<dbReference type="PIRSF" id="PIRSF002162">
    <property type="entry name" value="Ribosomal_L6"/>
    <property type="match status" value="1"/>
</dbReference>
<dbReference type="PRINTS" id="PR00059">
    <property type="entry name" value="RIBOSOMALL6"/>
</dbReference>
<dbReference type="SUPFAM" id="SSF56053">
    <property type="entry name" value="Ribosomal protein L6"/>
    <property type="match status" value="2"/>
</dbReference>
<dbReference type="PROSITE" id="PS00525">
    <property type="entry name" value="RIBOSOMAL_L6_1"/>
    <property type="match status" value="1"/>
</dbReference>
<sequence>MSRIGNKVIVIPAGVTVEVNGATVTVKGPKGELVRSFNENITLEIAENEITVKRPNDTKEMKMLHGTTRALLANMVEGVSNGFSKALEMIGVGYRAQLQGTKLVLSVGKSHQDEVEAPENIKFVVATPTSIVVEGISKEAVGQTAAYIRSRRSPEPYKGKGIRYVGEYVRRKEGKTGK</sequence>
<organism>
    <name type="scientific">Lactococcus lactis subsp. cremoris (strain SK11)</name>
    <dbReference type="NCBI Taxonomy" id="272622"/>
    <lineage>
        <taxon>Bacteria</taxon>
        <taxon>Bacillati</taxon>
        <taxon>Bacillota</taxon>
        <taxon>Bacilli</taxon>
        <taxon>Lactobacillales</taxon>
        <taxon>Streptococcaceae</taxon>
        <taxon>Lactococcus</taxon>
        <taxon>Lactococcus cremoris subsp. cremoris</taxon>
    </lineage>
</organism>
<name>RL6_LACLS</name>
<keyword id="KW-0687">Ribonucleoprotein</keyword>
<keyword id="KW-0689">Ribosomal protein</keyword>
<keyword id="KW-0694">RNA-binding</keyword>
<keyword id="KW-0699">rRNA-binding</keyword>
<reference key="1">
    <citation type="journal article" date="2006" name="Proc. Natl. Acad. Sci. U.S.A.">
        <title>Comparative genomics of the lactic acid bacteria.</title>
        <authorList>
            <person name="Makarova K.S."/>
            <person name="Slesarev A."/>
            <person name="Wolf Y.I."/>
            <person name="Sorokin A."/>
            <person name="Mirkin B."/>
            <person name="Koonin E.V."/>
            <person name="Pavlov A."/>
            <person name="Pavlova N."/>
            <person name="Karamychev V."/>
            <person name="Polouchine N."/>
            <person name="Shakhova V."/>
            <person name="Grigoriev I."/>
            <person name="Lou Y."/>
            <person name="Rohksar D."/>
            <person name="Lucas S."/>
            <person name="Huang K."/>
            <person name="Goodstein D.M."/>
            <person name="Hawkins T."/>
            <person name="Plengvidhya V."/>
            <person name="Welker D."/>
            <person name="Hughes J."/>
            <person name="Goh Y."/>
            <person name="Benson A."/>
            <person name="Baldwin K."/>
            <person name="Lee J.-H."/>
            <person name="Diaz-Muniz I."/>
            <person name="Dosti B."/>
            <person name="Smeianov V."/>
            <person name="Wechter W."/>
            <person name="Barabote R."/>
            <person name="Lorca G."/>
            <person name="Altermann E."/>
            <person name="Barrangou R."/>
            <person name="Ganesan B."/>
            <person name="Xie Y."/>
            <person name="Rawsthorne H."/>
            <person name="Tamir D."/>
            <person name="Parker C."/>
            <person name="Breidt F."/>
            <person name="Broadbent J.R."/>
            <person name="Hutkins R."/>
            <person name="O'Sullivan D."/>
            <person name="Steele J."/>
            <person name="Unlu G."/>
            <person name="Saier M.H. Jr."/>
            <person name="Klaenhammer T."/>
            <person name="Richardson P."/>
            <person name="Kozyavkin S."/>
            <person name="Weimer B.C."/>
            <person name="Mills D.A."/>
        </authorList>
    </citation>
    <scope>NUCLEOTIDE SEQUENCE [LARGE SCALE GENOMIC DNA]</scope>
    <source>
        <strain>SK11</strain>
    </source>
</reference>
<comment type="function">
    <text evidence="1">This protein binds to the 23S rRNA, and is important in its secondary structure. It is located near the subunit interface in the base of the L7/L12 stalk, and near the tRNA binding site of the peptidyltransferase center.</text>
</comment>
<comment type="subunit">
    <text evidence="1">Part of the 50S ribosomal subunit.</text>
</comment>
<comment type="similarity">
    <text evidence="1">Belongs to the universal ribosomal protein uL6 family.</text>
</comment>
<gene>
    <name evidence="1" type="primary">rplF</name>
    <name type="ordered locus">LACR_2386</name>
</gene>
<proteinExistence type="inferred from homology"/>
<accession>Q02W40</accession>
<evidence type="ECO:0000255" key="1">
    <source>
        <dbReference type="HAMAP-Rule" id="MF_01365"/>
    </source>
</evidence>
<evidence type="ECO:0000305" key="2"/>
<protein>
    <recommendedName>
        <fullName evidence="1">Large ribosomal subunit protein uL6</fullName>
    </recommendedName>
    <alternativeName>
        <fullName evidence="2">50S ribosomal protein L6</fullName>
    </alternativeName>
</protein>